<proteinExistence type="inferred from homology"/>
<dbReference type="EMBL" id="AE016877">
    <property type="protein sequence ID" value="AAP07244.1"/>
    <property type="molecule type" value="Genomic_DNA"/>
</dbReference>
<dbReference type="RefSeq" id="NP_830043.1">
    <property type="nucleotide sequence ID" value="NC_004722.1"/>
</dbReference>
<dbReference type="RefSeq" id="WP_001260793.1">
    <property type="nucleotide sequence ID" value="NZ_CP138336.1"/>
</dbReference>
<dbReference type="SMR" id="Q81J13"/>
<dbReference type="STRING" id="226900.BC_0164"/>
<dbReference type="MetOSite" id="Q81J13"/>
<dbReference type="GeneID" id="93010910"/>
<dbReference type="KEGG" id="bce:BC0164"/>
<dbReference type="PATRIC" id="fig|226900.8.peg.166"/>
<dbReference type="HOGENOM" id="CLU_082184_2_2_9"/>
<dbReference type="OrthoDB" id="9801330at2"/>
<dbReference type="Proteomes" id="UP000001417">
    <property type="component" value="Chromosome"/>
</dbReference>
<dbReference type="GO" id="GO:0022625">
    <property type="term" value="C:cytosolic large ribosomal subunit"/>
    <property type="evidence" value="ECO:0000318"/>
    <property type="project" value="GO_Central"/>
</dbReference>
<dbReference type="GO" id="GO:0005840">
    <property type="term" value="C:ribosome"/>
    <property type="evidence" value="ECO:0000318"/>
    <property type="project" value="GO_Central"/>
</dbReference>
<dbReference type="GO" id="GO:0003729">
    <property type="term" value="F:mRNA binding"/>
    <property type="evidence" value="ECO:0000318"/>
    <property type="project" value="GO_Central"/>
</dbReference>
<dbReference type="GO" id="GO:0003735">
    <property type="term" value="F:structural constituent of ribosome"/>
    <property type="evidence" value="ECO:0000318"/>
    <property type="project" value="GO_Central"/>
</dbReference>
<dbReference type="GO" id="GO:0017148">
    <property type="term" value="P:negative regulation of translation"/>
    <property type="evidence" value="ECO:0000318"/>
    <property type="project" value="GO_Central"/>
</dbReference>
<dbReference type="GO" id="GO:0006412">
    <property type="term" value="P:translation"/>
    <property type="evidence" value="ECO:0007669"/>
    <property type="project" value="UniProtKB-UniRule"/>
</dbReference>
<dbReference type="CDD" id="cd00392">
    <property type="entry name" value="Ribosomal_L13"/>
    <property type="match status" value="1"/>
</dbReference>
<dbReference type="FunFam" id="3.90.1180.10:FF:000001">
    <property type="entry name" value="50S ribosomal protein L13"/>
    <property type="match status" value="1"/>
</dbReference>
<dbReference type="Gene3D" id="3.90.1180.10">
    <property type="entry name" value="Ribosomal protein L13"/>
    <property type="match status" value="1"/>
</dbReference>
<dbReference type="HAMAP" id="MF_01366">
    <property type="entry name" value="Ribosomal_uL13"/>
    <property type="match status" value="1"/>
</dbReference>
<dbReference type="InterPro" id="IPR005822">
    <property type="entry name" value="Ribosomal_uL13"/>
</dbReference>
<dbReference type="InterPro" id="IPR005823">
    <property type="entry name" value="Ribosomal_uL13_bac-type"/>
</dbReference>
<dbReference type="InterPro" id="IPR023563">
    <property type="entry name" value="Ribosomal_uL13_CS"/>
</dbReference>
<dbReference type="InterPro" id="IPR036899">
    <property type="entry name" value="Ribosomal_uL13_sf"/>
</dbReference>
<dbReference type="NCBIfam" id="TIGR01066">
    <property type="entry name" value="rplM_bact"/>
    <property type="match status" value="1"/>
</dbReference>
<dbReference type="PANTHER" id="PTHR11545:SF2">
    <property type="entry name" value="LARGE RIBOSOMAL SUBUNIT PROTEIN UL13M"/>
    <property type="match status" value="1"/>
</dbReference>
<dbReference type="PANTHER" id="PTHR11545">
    <property type="entry name" value="RIBOSOMAL PROTEIN L13"/>
    <property type="match status" value="1"/>
</dbReference>
<dbReference type="Pfam" id="PF00572">
    <property type="entry name" value="Ribosomal_L13"/>
    <property type="match status" value="1"/>
</dbReference>
<dbReference type="PIRSF" id="PIRSF002181">
    <property type="entry name" value="Ribosomal_L13"/>
    <property type="match status" value="1"/>
</dbReference>
<dbReference type="SUPFAM" id="SSF52161">
    <property type="entry name" value="Ribosomal protein L13"/>
    <property type="match status" value="1"/>
</dbReference>
<dbReference type="PROSITE" id="PS00783">
    <property type="entry name" value="RIBOSOMAL_L13"/>
    <property type="match status" value="1"/>
</dbReference>
<comment type="function">
    <text evidence="1">This protein is one of the early assembly proteins of the 50S ribosomal subunit, although it is not seen to bind rRNA by itself. It is important during the early stages of 50S assembly.</text>
</comment>
<comment type="subunit">
    <text evidence="1">Part of the 50S ribosomal subunit.</text>
</comment>
<comment type="similarity">
    <text evidence="1">Belongs to the universal ribosomal protein uL13 family.</text>
</comment>
<accession>Q81J13</accession>
<evidence type="ECO:0000255" key="1">
    <source>
        <dbReference type="HAMAP-Rule" id="MF_01366"/>
    </source>
</evidence>
<evidence type="ECO:0000305" key="2"/>
<reference key="1">
    <citation type="journal article" date="2003" name="Nature">
        <title>Genome sequence of Bacillus cereus and comparative analysis with Bacillus anthracis.</title>
        <authorList>
            <person name="Ivanova N."/>
            <person name="Sorokin A."/>
            <person name="Anderson I."/>
            <person name="Galleron N."/>
            <person name="Candelon B."/>
            <person name="Kapatral V."/>
            <person name="Bhattacharyya A."/>
            <person name="Reznik G."/>
            <person name="Mikhailova N."/>
            <person name="Lapidus A."/>
            <person name="Chu L."/>
            <person name="Mazur M."/>
            <person name="Goltsman E."/>
            <person name="Larsen N."/>
            <person name="D'Souza M."/>
            <person name="Walunas T."/>
            <person name="Grechkin Y."/>
            <person name="Pusch G."/>
            <person name="Haselkorn R."/>
            <person name="Fonstein M."/>
            <person name="Ehrlich S.D."/>
            <person name="Overbeek R."/>
            <person name="Kyrpides N.C."/>
        </authorList>
    </citation>
    <scope>NUCLEOTIDE SEQUENCE [LARGE SCALE GENOMIC DNA]</scope>
    <source>
        <strain>ATCC 14579 / DSM 31 / CCUG 7414 / JCM 2152 / NBRC 15305 / NCIMB 9373 / NCTC 2599 / NRRL B-3711</strain>
    </source>
</reference>
<sequence length="145" mass="16428">MRTTFMAKANEVERKWYVVDAEGQTLGRLASEVASILRGKNKPTFTPHVDTGDHVIIINAEKIHLTGNKLNDKIYYRHTNHPGGLKQRTALEMRTNYPVQMLELAIKGMLPKGRLGRQVSKKLNVYAGAEHPHQAQKPEVYELRG</sequence>
<organism>
    <name type="scientific">Bacillus cereus (strain ATCC 14579 / DSM 31 / CCUG 7414 / JCM 2152 / NBRC 15305 / NCIMB 9373 / NCTC 2599 / NRRL B-3711)</name>
    <dbReference type="NCBI Taxonomy" id="226900"/>
    <lineage>
        <taxon>Bacteria</taxon>
        <taxon>Bacillati</taxon>
        <taxon>Bacillota</taxon>
        <taxon>Bacilli</taxon>
        <taxon>Bacillales</taxon>
        <taxon>Bacillaceae</taxon>
        <taxon>Bacillus</taxon>
        <taxon>Bacillus cereus group</taxon>
    </lineage>
</organism>
<gene>
    <name evidence="1" type="primary">rplM</name>
    <name type="ordered locus">BC_0164</name>
</gene>
<keyword id="KW-1185">Reference proteome</keyword>
<keyword id="KW-0687">Ribonucleoprotein</keyword>
<keyword id="KW-0689">Ribosomal protein</keyword>
<protein>
    <recommendedName>
        <fullName evidence="1">Large ribosomal subunit protein uL13</fullName>
    </recommendedName>
    <alternativeName>
        <fullName evidence="2">50S ribosomal protein L13</fullName>
    </alternativeName>
</protein>
<name>RL13_BACCR</name>
<feature type="chain" id="PRO_0000261683" description="Large ribosomal subunit protein uL13">
    <location>
        <begin position="1"/>
        <end position="145"/>
    </location>
</feature>